<name>VPK8_HUMAN</name>
<accession>P63122</accession>
<comment type="function">
    <text>Retroviral proteases have roles in the processing of the primary translation products and the maturation of the viral particle. Endogenous Pro proteins may have kept, lost or modified their original function during evolution.</text>
</comment>
<comment type="catalytic activity">
    <reaction>
        <text>Processing at the authentic HIV-1 PR recognition site and release of the mature p17 matrix and the p24 capsid protein, as a result of the cleavage of the -SQNY-|-PIVQ- cleavage site.</text>
        <dbReference type="EC" id="3.4.23.50"/>
    </reaction>
</comment>
<comment type="subunit">
    <text evidence="1">Active as a homodimer.</text>
</comment>
<comment type="alternative products">
    <event type="ribosomal frameshifting"/>
    <isoform>
        <id>P63122-1</id>
        <name>1</name>
        <sequence type="displayed"/>
    </isoform>
    <text>This protein is synthesized as Gag-Pro and Gag-Pro-Pol polyprotein. These polyproteins are thought, by similarity with type-B retroviruses, to be generated by -1 frameshifts occurring at the Gag-Pro and Pro-Pol genes boundaries.</text>
</comment>
<comment type="PTM">
    <text evidence="1">Autoproteolytically processed at the N-terminus. Expected C-terminal autoprocessing not detected. The sequence shown is that of the processed Pro protein (By similarity).</text>
</comment>
<comment type="miscellaneous">
    <text>Insertional polymorphism. Provirus present in 16% of tested individuals.</text>
</comment>
<comment type="similarity">
    <text evidence="5">Belongs to the peptidase A2 family. HERV class-II K(HML-2) subfamily.</text>
</comment>
<sequence>WASQVSENRPVCKAIIQGKQFEGLVDTGADVSIIALNQWPKNWPKQKAVIGLVGIGTASEVYQSMEILHCLGPDNQESTVQPMITSIPLNLWGRDLLQQWGAEITMPAPLYSPTSQKIMTKRGYIPGKGLGKNEDGIKIPFEAKINQKREGIGYPF</sequence>
<proteinExistence type="inferred from homology"/>
<organism>
    <name type="scientific">Homo sapiens</name>
    <name type="common">Human</name>
    <dbReference type="NCBI Taxonomy" id="9606"/>
    <lineage>
        <taxon>Eukaryota</taxon>
        <taxon>Metazoa</taxon>
        <taxon>Chordata</taxon>
        <taxon>Craniata</taxon>
        <taxon>Vertebrata</taxon>
        <taxon>Euteleostomi</taxon>
        <taxon>Mammalia</taxon>
        <taxon>Eutheria</taxon>
        <taxon>Euarchontoglires</taxon>
        <taxon>Primates</taxon>
        <taxon>Haplorrhini</taxon>
        <taxon>Catarrhini</taxon>
        <taxon>Hominidae</taxon>
        <taxon>Homo</taxon>
    </lineage>
</organism>
<evidence type="ECO:0000250" key="1"/>
<evidence type="ECO:0000255" key="2">
    <source>
        <dbReference type="PROSITE-ProRule" id="PRU00092"/>
    </source>
</evidence>
<evidence type="ECO:0000255" key="3">
    <source>
        <dbReference type="PROSITE-ProRule" id="PRU00275"/>
    </source>
</evidence>
<evidence type="ECO:0000255" key="4">
    <source>
        <dbReference type="PROSITE-ProRule" id="PRU10094"/>
    </source>
</evidence>
<evidence type="ECO:0000305" key="5"/>
<keyword id="KW-0064">Aspartyl protease</keyword>
<keyword id="KW-0068">Autocatalytic cleavage</keyword>
<keyword id="KW-0895">ERV</keyword>
<keyword id="KW-0378">Hydrolase</keyword>
<keyword id="KW-0645">Protease</keyword>
<keyword id="KW-1185">Reference proteome</keyword>
<keyword id="KW-0688">Ribosomal frameshifting</keyword>
<keyword id="KW-0814">Transposable element</keyword>
<reference key="1">
    <citation type="journal article" date="2006" name="Nature">
        <title>DNA sequence and analysis of human chromosome 8.</title>
        <authorList>
            <person name="Nusbaum C."/>
            <person name="Mikkelsen T.S."/>
            <person name="Zody M.C."/>
            <person name="Asakawa S."/>
            <person name="Taudien S."/>
            <person name="Garber M."/>
            <person name="Kodira C.D."/>
            <person name="Schueler M.G."/>
            <person name="Shimizu A."/>
            <person name="Whittaker C.A."/>
            <person name="Chang J.L."/>
            <person name="Cuomo C.A."/>
            <person name="Dewar K."/>
            <person name="FitzGerald M.G."/>
            <person name="Yang X."/>
            <person name="Allen N.R."/>
            <person name="Anderson S."/>
            <person name="Asakawa T."/>
            <person name="Blechschmidt K."/>
            <person name="Bloom T."/>
            <person name="Borowsky M.L."/>
            <person name="Butler J."/>
            <person name="Cook A."/>
            <person name="Corum B."/>
            <person name="DeArellano K."/>
            <person name="DeCaprio D."/>
            <person name="Dooley K.T."/>
            <person name="Dorris L. III"/>
            <person name="Engels R."/>
            <person name="Gloeckner G."/>
            <person name="Hafez N."/>
            <person name="Hagopian D.S."/>
            <person name="Hall J.L."/>
            <person name="Ishikawa S.K."/>
            <person name="Jaffe D.B."/>
            <person name="Kamat A."/>
            <person name="Kudoh J."/>
            <person name="Lehmann R."/>
            <person name="Lokitsang T."/>
            <person name="Macdonald P."/>
            <person name="Major J.E."/>
            <person name="Matthews C.D."/>
            <person name="Mauceli E."/>
            <person name="Menzel U."/>
            <person name="Mihalev A.H."/>
            <person name="Minoshima S."/>
            <person name="Murayama Y."/>
            <person name="Naylor J.W."/>
            <person name="Nicol R."/>
            <person name="Nguyen C."/>
            <person name="O'Leary S.B."/>
            <person name="O'Neill K."/>
            <person name="Parker S.C.J."/>
            <person name="Polley A."/>
            <person name="Raymond C.K."/>
            <person name="Reichwald K."/>
            <person name="Rodriguez J."/>
            <person name="Sasaki T."/>
            <person name="Schilhabel M."/>
            <person name="Siddiqui R."/>
            <person name="Smith C.L."/>
            <person name="Sneddon T.P."/>
            <person name="Talamas J.A."/>
            <person name="Tenzin P."/>
            <person name="Topham K."/>
            <person name="Venkataraman V."/>
            <person name="Wen G."/>
            <person name="Yamazaki S."/>
            <person name="Young S.K."/>
            <person name="Zeng Q."/>
            <person name="Zimmer A.R."/>
            <person name="Rosenthal A."/>
            <person name="Birren B.W."/>
            <person name="Platzer M."/>
            <person name="Shimizu N."/>
            <person name="Lander E.S."/>
        </authorList>
    </citation>
    <scope>NUCLEOTIDE SEQUENCE [LARGE SCALE GENOMIC DNA]</scope>
</reference>
<reference key="2">
    <citation type="journal article" date="2001" name="Curr. Biol.">
        <title>Insertional polymorphisms of full-length endogenous retroviruses in humans.</title>
        <authorList>
            <person name="Turner G."/>
            <person name="Barbulescu M."/>
            <person name="Su M."/>
            <person name="Jensen-Seaman M.I."/>
            <person name="Kidd K.K."/>
            <person name="Lenz J."/>
        </authorList>
    </citation>
    <scope>IDENTIFICATION</scope>
</reference>
<gene>
    <name type="primary">ERVK-8</name>
</gene>
<dbReference type="EC" id="3.4.23.50"/>
<dbReference type="EMBL" id="AC134684">
    <property type="status" value="NOT_ANNOTATED_CDS"/>
    <property type="molecule type" value="Genomic_DNA"/>
</dbReference>
<dbReference type="SMR" id="P63122"/>
<dbReference type="iPTMnet" id="P63122"/>
<dbReference type="PhosphoSitePlus" id="P63122"/>
<dbReference type="BioMuta" id="HGNC:32302"/>
<dbReference type="PeptideAtlas" id="P63122"/>
<dbReference type="GeneCards" id="ERVK-8"/>
<dbReference type="HGNC" id="HGNC:32302">
    <property type="gene designation" value="ERVK-8"/>
</dbReference>
<dbReference type="neXtProt" id="NX_P63122"/>
<dbReference type="PhylomeDB" id="P63122"/>
<dbReference type="Pharos" id="P63122">
    <property type="development level" value="Tdark"/>
</dbReference>
<dbReference type="Proteomes" id="UP000005640">
    <property type="component" value="Unplaced"/>
</dbReference>
<dbReference type="GO" id="GO:0004190">
    <property type="term" value="F:aspartic-type endopeptidase activity"/>
    <property type="evidence" value="ECO:0007669"/>
    <property type="project" value="UniProtKB-KW"/>
</dbReference>
<dbReference type="GO" id="GO:0003676">
    <property type="term" value="F:nucleic acid binding"/>
    <property type="evidence" value="ECO:0007669"/>
    <property type="project" value="InterPro"/>
</dbReference>
<dbReference type="GO" id="GO:0006508">
    <property type="term" value="P:proteolysis"/>
    <property type="evidence" value="ECO:0007669"/>
    <property type="project" value="UniProtKB-KW"/>
</dbReference>
<dbReference type="GO" id="GO:0075523">
    <property type="term" value="P:viral translational frameshifting"/>
    <property type="evidence" value="ECO:0007669"/>
    <property type="project" value="UniProtKB-KW"/>
</dbReference>
<dbReference type="CDD" id="cd05482">
    <property type="entry name" value="HIV_retropepsin_like"/>
    <property type="match status" value="1"/>
</dbReference>
<dbReference type="Gene3D" id="2.40.70.10">
    <property type="entry name" value="Acid Proteases"/>
    <property type="match status" value="1"/>
</dbReference>
<dbReference type="InterPro" id="IPR001969">
    <property type="entry name" value="Aspartic_peptidase_AS"/>
</dbReference>
<dbReference type="InterPro" id="IPR000467">
    <property type="entry name" value="G_patch_dom"/>
</dbReference>
<dbReference type="InterPro" id="IPR051592">
    <property type="entry name" value="HERV-K_Pro_peptidase_A2"/>
</dbReference>
<dbReference type="InterPro" id="IPR001995">
    <property type="entry name" value="Peptidase_A2_cat"/>
</dbReference>
<dbReference type="InterPro" id="IPR021109">
    <property type="entry name" value="Peptidase_aspartic_dom_sf"/>
</dbReference>
<dbReference type="InterPro" id="IPR034170">
    <property type="entry name" value="Retropepsin-like_cat_dom"/>
</dbReference>
<dbReference type="InterPro" id="IPR018061">
    <property type="entry name" value="Retropepsins"/>
</dbReference>
<dbReference type="PANTHER" id="PTHR19422">
    <property type="entry name" value="GAG RETROVIRAL POLYPROTEIN"/>
    <property type="match status" value="1"/>
</dbReference>
<dbReference type="PANTHER" id="PTHR19422:SF123">
    <property type="entry name" value="RT1 CLASS I, LOCUS CE15"/>
    <property type="match status" value="1"/>
</dbReference>
<dbReference type="Pfam" id="PF01585">
    <property type="entry name" value="G-patch"/>
    <property type="match status" value="1"/>
</dbReference>
<dbReference type="Pfam" id="PF00077">
    <property type="entry name" value="RVP"/>
    <property type="match status" value="1"/>
</dbReference>
<dbReference type="SMART" id="SM00443">
    <property type="entry name" value="G_patch"/>
    <property type="match status" value="1"/>
</dbReference>
<dbReference type="SUPFAM" id="SSF50630">
    <property type="entry name" value="Acid proteases"/>
    <property type="match status" value="1"/>
</dbReference>
<dbReference type="PROSITE" id="PS50175">
    <property type="entry name" value="ASP_PROT_RETROV"/>
    <property type="match status" value="1"/>
</dbReference>
<dbReference type="PROSITE" id="PS00141">
    <property type="entry name" value="ASP_PROTEASE"/>
    <property type="match status" value="1"/>
</dbReference>
<dbReference type="PROSITE" id="PS50174">
    <property type="entry name" value="G_PATCH"/>
    <property type="match status" value="1"/>
</dbReference>
<protein>
    <recommendedName>
        <fullName>Endogenous retrovirus group K member 8 Pro protein</fullName>
    </recommendedName>
    <alternativeName>
        <fullName>HERV-K115 Pro protein</fullName>
    </alternativeName>
    <alternativeName>
        <fullName>HERV-K_8p23.1 provirus ancestral Pro protein</fullName>
        <ecNumber>3.4.23.50</ecNumber>
    </alternativeName>
    <alternativeName>
        <fullName>Protease</fullName>
    </alternativeName>
    <alternativeName>
        <fullName>Proteinase</fullName>
        <shortName>PR</shortName>
    </alternativeName>
</protein>
<feature type="chain" id="PRO_0000199541" description="Endogenous retrovirus group K member 8 Pro protein">
    <location>
        <begin position="1"/>
        <end position="156"/>
    </location>
</feature>
<feature type="domain" description="Peptidase A2" evidence="3">
    <location>
        <begin position="21"/>
        <end position="96"/>
    </location>
</feature>
<feature type="domain" description="G-patch" evidence="2">
    <location>
        <begin position="111"/>
        <end position="156"/>
    </location>
</feature>
<feature type="active site" evidence="4">
    <location>
        <position position="26"/>
    </location>
</feature>